<evidence type="ECO:0000255" key="1">
    <source>
        <dbReference type="HAMAP-Rule" id="MF_00518"/>
    </source>
</evidence>
<feature type="chain" id="PRO_0000164548" description="D-aminoacyl-tRNA deacylase">
    <location>
        <begin position="1"/>
        <end position="145"/>
    </location>
</feature>
<feature type="short sequence motif" description="Gly-cisPro motif, important for rejection of L-amino acids" evidence="1">
    <location>
        <begin position="137"/>
        <end position="138"/>
    </location>
</feature>
<gene>
    <name evidence="1" type="primary">dtd</name>
    <name type="ordered locus">LBA0933</name>
</gene>
<comment type="function">
    <text evidence="1">An aminoacyl-tRNA editing enzyme that deacylates mischarged D-aminoacyl-tRNAs. Also deacylates mischarged glycyl-tRNA(Ala), protecting cells against glycine mischarging by AlaRS. Acts via tRNA-based rather than protein-based catalysis; rejects L-amino acids rather than detecting D-amino acids in the active site. By recycling D-aminoacyl-tRNA to D-amino acids and free tRNA molecules, this enzyme counteracts the toxicity associated with the formation of D-aminoacyl-tRNA entities in vivo and helps enforce protein L-homochirality.</text>
</comment>
<comment type="catalytic activity">
    <reaction evidence="1">
        <text>glycyl-tRNA(Ala) + H2O = tRNA(Ala) + glycine + H(+)</text>
        <dbReference type="Rhea" id="RHEA:53744"/>
        <dbReference type="Rhea" id="RHEA-COMP:9657"/>
        <dbReference type="Rhea" id="RHEA-COMP:13640"/>
        <dbReference type="ChEBI" id="CHEBI:15377"/>
        <dbReference type="ChEBI" id="CHEBI:15378"/>
        <dbReference type="ChEBI" id="CHEBI:57305"/>
        <dbReference type="ChEBI" id="CHEBI:78442"/>
        <dbReference type="ChEBI" id="CHEBI:78522"/>
        <dbReference type="EC" id="3.1.1.96"/>
    </reaction>
</comment>
<comment type="catalytic activity">
    <reaction evidence="1">
        <text>a D-aminoacyl-tRNA + H2O = a tRNA + a D-alpha-amino acid + H(+)</text>
        <dbReference type="Rhea" id="RHEA:13953"/>
        <dbReference type="Rhea" id="RHEA-COMP:10123"/>
        <dbReference type="Rhea" id="RHEA-COMP:10124"/>
        <dbReference type="ChEBI" id="CHEBI:15377"/>
        <dbReference type="ChEBI" id="CHEBI:15378"/>
        <dbReference type="ChEBI" id="CHEBI:59871"/>
        <dbReference type="ChEBI" id="CHEBI:78442"/>
        <dbReference type="ChEBI" id="CHEBI:79333"/>
        <dbReference type="EC" id="3.1.1.96"/>
    </reaction>
</comment>
<comment type="subunit">
    <text evidence="1">Homodimer.</text>
</comment>
<comment type="subcellular location">
    <subcellularLocation>
        <location evidence="1">Cytoplasm</location>
    </subcellularLocation>
</comment>
<comment type="domain">
    <text evidence="1">A Gly-cisPro motif from one monomer fits into the active site of the other monomer to allow specific chiral rejection of L-amino acids.</text>
</comment>
<comment type="similarity">
    <text evidence="1">Belongs to the DTD family.</text>
</comment>
<organism>
    <name type="scientific">Lactobacillus acidophilus (strain ATCC 700396 / NCK56 / N2 / NCFM)</name>
    <dbReference type="NCBI Taxonomy" id="272621"/>
    <lineage>
        <taxon>Bacteria</taxon>
        <taxon>Bacillati</taxon>
        <taxon>Bacillota</taxon>
        <taxon>Bacilli</taxon>
        <taxon>Lactobacillales</taxon>
        <taxon>Lactobacillaceae</taxon>
        <taxon>Lactobacillus</taxon>
    </lineage>
</organism>
<proteinExistence type="inferred from homology"/>
<sequence>MRVVIQRVNHAQVDIDGKTVGNIGKGFLLLVGIKNGDDLSVIKKAADKIAKMRIFEDEEGKTNLSLKDVNGEILSVSQFTLMANTKKGNRPSFVEAMRPPMSKELWEDFNKELENDGFHVETGEFGADMKVSLENDGPFTIVLDL</sequence>
<reference key="1">
    <citation type="journal article" date="2005" name="Proc. Natl. Acad. Sci. U.S.A.">
        <title>Complete genome sequence of the probiotic lactic acid bacterium Lactobacillus acidophilus NCFM.</title>
        <authorList>
            <person name="Altermann E."/>
            <person name="Russell W.M."/>
            <person name="Azcarate-Peril M.A."/>
            <person name="Barrangou R."/>
            <person name="Buck B.L."/>
            <person name="McAuliffe O."/>
            <person name="Souther N."/>
            <person name="Dobson A."/>
            <person name="Duong T."/>
            <person name="Callanan M."/>
            <person name="Lick S."/>
            <person name="Hamrick A."/>
            <person name="Cano R."/>
            <person name="Klaenhammer T.R."/>
        </authorList>
    </citation>
    <scope>NUCLEOTIDE SEQUENCE [LARGE SCALE GENOMIC DNA]</scope>
    <source>
        <strain>ATCC 700396 / NCK56 / N2 / NCFM</strain>
    </source>
</reference>
<name>DTD_LACAC</name>
<accession>Q5FKI6</accession>
<keyword id="KW-0963">Cytoplasm</keyword>
<keyword id="KW-0378">Hydrolase</keyword>
<keyword id="KW-1185">Reference proteome</keyword>
<keyword id="KW-0694">RNA-binding</keyword>
<keyword id="KW-0820">tRNA-binding</keyword>
<dbReference type="EC" id="3.1.1.96" evidence="1"/>
<dbReference type="EMBL" id="CP000033">
    <property type="protein sequence ID" value="AAV42788.1"/>
    <property type="molecule type" value="Genomic_DNA"/>
</dbReference>
<dbReference type="RefSeq" id="WP_003547036.1">
    <property type="nucleotide sequence ID" value="NC_006814.3"/>
</dbReference>
<dbReference type="RefSeq" id="YP_193819.1">
    <property type="nucleotide sequence ID" value="NC_006814.3"/>
</dbReference>
<dbReference type="SMR" id="Q5FKI6"/>
<dbReference type="STRING" id="272621.LBA0933"/>
<dbReference type="GeneID" id="93289949"/>
<dbReference type="KEGG" id="lac:LBA0933"/>
<dbReference type="PATRIC" id="fig|272621.13.peg.887"/>
<dbReference type="eggNOG" id="COG1490">
    <property type="taxonomic scope" value="Bacteria"/>
</dbReference>
<dbReference type="HOGENOM" id="CLU_076901_1_0_9"/>
<dbReference type="OrthoDB" id="9801395at2"/>
<dbReference type="BioCyc" id="LACI272621:G1G49-938-MONOMER"/>
<dbReference type="Proteomes" id="UP000006381">
    <property type="component" value="Chromosome"/>
</dbReference>
<dbReference type="GO" id="GO:0005737">
    <property type="term" value="C:cytoplasm"/>
    <property type="evidence" value="ECO:0007669"/>
    <property type="project" value="UniProtKB-SubCell"/>
</dbReference>
<dbReference type="GO" id="GO:0051500">
    <property type="term" value="F:D-tyrosyl-tRNA(Tyr) deacylase activity"/>
    <property type="evidence" value="ECO:0007669"/>
    <property type="project" value="TreeGrafter"/>
</dbReference>
<dbReference type="GO" id="GO:0106026">
    <property type="term" value="F:Gly-tRNA(Ala) deacylase activity"/>
    <property type="evidence" value="ECO:0007669"/>
    <property type="project" value="UniProtKB-UniRule"/>
</dbReference>
<dbReference type="GO" id="GO:0043908">
    <property type="term" value="F:Ser(Gly)-tRNA(Ala) hydrolase activity"/>
    <property type="evidence" value="ECO:0007669"/>
    <property type="project" value="UniProtKB-UniRule"/>
</dbReference>
<dbReference type="GO" id="GO:0000049">
    <property type="term" value="F:tRNA binding"/>
    <property type="evidence" value="ECO:0007669"/>
    <property type="project" value="UniProtKB-UniRule"/>
</dbReference>
<dbReference type="GO" id="GO:0019478">
    <property type="term" value="P:D-amino acid catabolic process"/>
    <property type="evidence" value="ECO:0007669"/>
    <property type="project" value="UniProtKB-UniRule"/>
</dbReference>
<dbReference type="CDD" id="cd00563">
    <property type="entry name" value="Dtyr_deacylase"/>
    <property type="match status" value="1"/>
</dbReference>
<dbReference type="FunFam" id="3.50.80.10:FF:000001">
    <property type="entry name" value="D-aminoacyl-tRNA deacylase"/>
    <property type="match status" value="1"/>
</dbReference>
<dbReference type="Gene3D" id="3.50.80.10">
    <property type="entry name" value="D-tyrosyl-tRNA(Tyr) deacylase"/>
    <property type="match status" value="1"/>
</dbReference>
<dbReference type="HAMAP" id="MF_00518">
    <property type="entry name" value="Deacylase_Dtd"/>
    <property type="match status" value="1"/>
</dbReference>
<dbReference type="InterPro" id="IPR003732">
    <property type="entry name" value="Daa-tRNA_deacyls_DTD"/>
</dbReference>
<dbReference type="InterPro" id="IPR023509">
    <property type="entry name" value="DTD-like_sf"/>
</dbReference>
<dbReference type="NCBIfam" id="TIGR00256">
    <property type="entry name" value="D-aminoacyl-tRNA deacylase"/>
    <property type="match status" value="1"/>
</dbReference>
<dbReference type="PANTHER" id="PTHR10472:SF5">
    <property type="entry name" value="D-AMINOACYL-TRNA DEACYLASE 1"/>
    <property type="match status" value="1"/>
</dbReference>
<dbReference type="PANTHER" id="PTHR10472">
    <property type="entry name" value="D-TYROSYL-TRNA TYR DEACYLASE"/>
    <property type="match status" value="1"/>
</dbReference>
<dbReference type="Pfam" id="PF02580">
    <property type="entry name" value="Tyr_Deacylase"/>
    <property type="match status" value="1"/>
</dbReference>
<dbReference type="SUPFAM" id="SSF69500">
    <property type="entry name" value="DTD-like"/>
    <property type="match status" value="1"/>
</dbReference>
<protein>
    <recommendedName>
        <fullName evidence="1">D-aminoacyl-tRNA deacylase</fullName>
        <shortName evidence="1">DTD</shortName>
        <ecNumber evidence="1">3.1.1.96</ecNumber>
    </recommendedName>
    <alternativeName>
        <fullName evidence="1">Gly-tRNA(Ala) deacylase</fullName>
    </alternativeName>
</protein>